<comment type="function">
    <text evidence="1">Component of the SOS system and an inhibitor of cell division. Accumulation of SulA causes rapid cessation of cell division and the appearance of long, non-septate filaments. In the presence of GTP, binds a polymerization-competent form of FtsZ in a 1:1 ratio, thus inhibiting FtsZ polymerization and therefore preventing it from participating in the assembly of the Z ring. This mechanism prevents the premature segregation of damaged DNA to daughter cells during cell division.</text>
</comment>
<comment type="subunit">
    <text evidence="1">Interacts with FtsZ.</text>
</comment>
<comment type="induction">
    <text evidence="1">By DNA damage, as part of the SOS response.</text>
</comment>
<comment type="PTM">
    <text evidence="1">Is rapidly cleaved and degraded by the Lon protease once DNA damage is repaired.</text>
</comment>
<comment type="similarity">
    <text evidence="1">Belongs to the SulA family.</text>
</comment>
<dbReference type="EMBL" id="CP000038">
    <property type="protein sequence ID" value="AAZ87699.1"/>
    <property type="molecule type" value="Genomic_DNA"/>
</dbReference>
<dbReference type="RefSeq" id="WP_000288710.1">
    <property type="nucleotide sequence ID" value="NC_007384.1"/>
</dbReference>
<dbReference type="SMR" id="Q3Z3G3"/>
<dbReference type="GeneID" id="93776456"/>
<dbReference type="KEGG" id="ssn:SSON_0962"/>
<dbReference type="HOGENOM" id="CLU_118972_1_0_6"/>
<dbReference type="Proteomes" id="UP000002529">
    <property type="component" value="Chromosome"/>
</dbReference>
<dbReference type="GO" id="GO:0000917">
    <property type="term" value="P:division septum assembly"/>
    <property type="evidence" value="ECO:0007669"/>
    <property type="project" value="UniProtKB-KW"/>
</dbReference>
<dbReference type="GO" id="GO:0006281">
    <property type="term" value="P:DNA repair"/>
    <property type="evidence" value="ECO:0007669"/>
    <property type="project" value="TreeGrafter"/>
</dbReference>
<dbReference type="GO" id="GO:0051782">
    <property type="term" value="P:negative regulation of cell division"/>
    <property type="evidence" value="ECO:0007669"/>
    <property type="project" value="UniProtKB-UniRule"/>
</dbReference>
<dbReference type="GO" id="GO:0009432">
    <property type="term" value="P:SOS response"/>
    <property type="evidence" value="ECO:0007669"/>
    <property type="project" value="UniProtKB-UniRule"/>
</dbReference>
<dbReference type="FunFam" id="3.40.50.300:FF:000417">
    <property type="entry name" value="Cell division inhibitor SulA"/>
    <property type="match status" value="1"/>
</dbReference>
<dbReference type="Gene3D" id="3.40.50.300">
    <property type="entry name" value="P-loop containing nucleotide triphosphate hydrolases"/>
    <property type="match status" value="1"/>
</dbReference>
<dbReference type="HAMAP" id="MF_01179">
    <property type="entry name" value="SulA"/>
    <property type="match status" value="1"/>
</dbReference>
<dbReference type="InterPro" id="IPR004596">
    <property type="entry name" value="Cell_div_suppressor_SulA"/>
</dbReference>
<dbReference type="InterPro" id="IPR027417">
    <property type="entry name" value="P-loop_NTPase"/>
</dbReference>
<dbReference type="InterPro" id="IPR050356">
    <property type="entry name" value="SulA_CellDiv_inhibitor"/>
</dbReference>
<dbReference type="InterPro" id="IPR047696">
    <property type="entry name" value="SulA_enterobact"/>
</dbReference>
<dbReference type="NCBIfam" id="NF007892">
    <property type="entry name" value="PRK10595.1"/>
    <property type="match status" value="1"/>
</dbReference>
<dbReference type="NCBIfam" id="TIGR00623">
    <property type="entry name" value="SOS_SulA_coli"/>
    <property type="match status" value="1"/>
</dbReference>
<dbReference type="PANTHER" id="PTHR35369">
    <property type="entry name" value="BLR3025 PROTEIN-RELATED"/>
    <property type="match status" value="1"/>
</dbReference>
<dbReference type="PANTHER" id="PTHR35369:SF4">
    <property type="entry name" value="CELL DIVISION INHIBITOR SULA"/>
    <property type="match status" value="1"/>
</dbReference>
<dbReference type="Pfam" id="PF03846">
    <property type="entry name" value="SulA"/>
    <property type="match status" value="1"/>
</dbReference>
<dbReference type="PIRSF" id="PIRSF003093">
    <property type="entry name" value="SulA"/>
    <property type="match status" value="1"/>
</dbReference>
<dbReference type="SUPFAM" id="SSF52540">
    <property type="entry name" value="P-loop containing nucleoside triphosphate hydrolases"/>
    <property type="match status" value="1"/>
</dbReference>
<gene>
    <name evidence="1" type="primary">sulA</name>
    <name type="ordered locus">SSON_0962</name>
</gene>
<proteinExistence type="inferred from homology"/>
<keyword id="KW-0131">Cell cycle</keyword>
<keyword id="KW-0132">Cell division</keyword>
<keyword id="KW-0227">DNA damage</keyword>
<keyword id="KW-1185">Reference proteome</keyword>
<keyword id="KW-0717">Septation</keyword>
<keyword id="KW-0742">SOS response</keyword>
<reference key="1">
    <citation type="journal article" date="2005" name="Nucleic Acids Res.">
        <title>Genome dynamics and diversity of Shigella species, the etiologic agents of bacillary dysentery.</title>
        <authorList>
            <person name="Yang F."/>
            <person name="Yang J."/>
            <person name="Zhang X."/>
            <person name="Chen L."/>
            <person name="Jiang Y."/>
            <person name="Yan Y."/>
            <person name="Tang X."/>
            <person name="Wang J."/>
            <person name="Xiong Z."/>
            <person name="Dong J."/>
            <person name="Xue Y."/>
            <person name="Zhu Y."/>
            <person name="Xu X."/>
            <person name="Sun L."/>
            <person name="Chen S."/>
            <person name="Nie H."/>
            <person name="Peng J."/>
            <person name="Xu J."/>
            <person name="Wang Y."/>
            <person name="Yuan Z."/>
            <person name="Wen Y."/>
            <person name="Yao Z."/>
            <person name="Shen Y."/>
            <person name="Qiang B."/>
            <person name="Hou Y."/>
            <person name="Yu J."/>
            <person name="Jin Q."/>
        </authorList>
    </citation>
    <scope>NUCLEOTIDE SEQUENCE [LARGE SCALE GENOMIC DNA]</scope>
    <source>
        <strain>Ss046</strain>
    </source>
</reference>
<sequence>MYTSGYAHRSSSFSSAASKIARVSTENTTAGLISEVVYREDQPMMTQLLLLPLLQQLGQQSRWQLWLTPQQKLSREWVQASGLPLTKVMQISQLSPCHTVESMVRALRTGNYSVVIGWLADDLTEEEHAELVDAANEGNAMGFIMRPVSASSHATRQLSGLKIHSNLYH</sequence>
<evidence type="ECO:0000255" key="1">
    <source>
        <dbReference type="HAMAP-Rule" id="MF_01179"/>
    </source>
</evidence>
<protein>
    <recommendedName>
        <fullName evidence="1">Cell division inhibitor SulA</fullName>
    </recommendedName>
</protein>
<accession>Q3Z3G3</accession>
<organism>
    <name type="scientific">Shigella sonnei (strain Ss046)</name>
    <dbReference type="NCBI Taxonomy" id="300269"/>
    <lineage>
        <taxon>Bacteria</taxon>
        <taxon>Pseudomonadati</taxon>
        <taxon>Pseudomonadota</taxon>
        <taxon>Gammaproteobacteria</taxon>
        <taxon>Enterobacterales</taxon>
        <taxon>Enterobacteriaceae</taxon>
        <taxon>Shigella</taxon>
    </lineage>
</organism>
<feature type="chain" id="PRO_0000343978" description="Cell division inhibitor SulA">
    <location>
        <begin position="1"/>
        <end position="169"/>
    </location>
</feature>
<feature type="region of interest" description="FtsZ binding" evidence="1">
    <location>
        <begin position="106"/>
        <end position="112"/>
    </location>
</feature>
<feature type="region of interest" description="Lon protease binding" evidence="1">
    <location>
        <begin position="162"/>
        <end position="169"/>
    </location>
</feature>
<feature type="site" description="Essential for degradation by Lon protease" evidence="1">
    <location>
        <position position="169"/>
    </location>
</feature>
<name>SULA_SHISS</name>